<comment type="subcellular location">
    <subcellularLocation>
        <location evidence="2">Membrane</location>
        <topology evidence="2">Single-pass membrane protein</topology>
    </subcellularLocation>
</comment>
<dbReference type="EMBL" id="Z38061">
    <property type="status" value="NOT_ANNOTATED_CDS"/>
    <property type="molecule type" value="Genomic_DNA"/>
</dbReference>
<dbReference type="EMBL" id="BK006942">
    <property type="protein sequence ID" value="DAA08568.1"/>
    <property type="molecule type" value="Genomic_DNA"/>
</dbReference>
<dbReference type="RefSeq" id="NP_878100.1">
    <property type="nucleotide sequence ID" value="NM_001184656.1"/>
</dbReference>
<dbReference type="BioGRID" id="37037">
    <property type="interactions" value="49"/>
</dbReference>
<dbReference type="FunCoup" id="Q3E739">
    <property type="interactions" value="4"/>
</dbReference>
<dbReference type="STRING" id="4932.YIR021W-A"/>
<dbReference type="PaxDb" id="4932-YIR021W-A"/>
<dbReference type="EnsemblFungi" id="YIR021W-A_mRNA">
    <property type="protein sequence ID" value="YIR021W-A"/>
    <property type="gene ID" value="YIR021W-A"/>
</dbReference>
<dbReference type="GeneID" id="1466495"/>
<dbReference type="KEGG" id="sce:YIR021W-A"/>
<dbReference type="AGR" id="SGD:S000028838"/>
<dbReference type="SGD" id="S000028838">
    <property type="gene designation" value="YIR021W-A"/>
</dbReference>
<dbReference type="VEuPathDB" id="FungiDB:YIR021W-A"/>
<dbReference type="HOGENOM" id="CLU_2759238_0_0_1"/>
<dbReference type="InParanoid" id="Q3E739"/>
<dbReference type="BioCyc" id="YEAST:G3O-31476-MONOMER"/>
<dbReference type="BioGRID-ORCS" id="1466495">
    <property type="hits" value="0 hits in 10 CRISPR screens"/>
</dbReference>
<dbReference type="PRO" id="PR:Q3E739"/>
<dbReference type="Proteomes" id="UP000002311">
    <property type="component" value="Chromosome IX"/>
</dbReference>
<dbReference type="RNAct" id="Q3E739">
    <property type="molecule type" value="protein"/>
</dbReference>
<dbReference type="GO" id="GO:0016020">
    <property type="term" value="C:membrane"/>
    <property type="evidence" value="ECO:0007669"/>
    <property type="project" value="UniProtKB-SubCell"/>
</dbReference>
<reference key="1">
    <citation type="journal article" date="1997" name="Nature">
        <title>The nucleotide sequence of Saccharomyces cerevisiae chromosome IX.</title>
        <authorList>
            <person name="Churcher C.M."/>
            <person name="Bowman S."/>
            <person name="Badcock K."/>
            <person name="Bankier A.T."/>
            <person name="Brown D."/>
            <person name="Chillingworth T."/>
            <person name="Connor R."/>
            <person name="Devlin K."/>
            <person name="Gentles S."/>
            <person name="Hamlin N."/>
            <person name="Harris D.E."/>
            <person name="Horsnell T."/>
            <person name="Hunt S."/>
            <person name="Jagels K."/>
            <person name="Jones M."/>
            <person name="Lye G."/>
            <person name="Moule S."/>
            <person name="Odell C."/>
            <person name="Pearson D."/>
            <person name="Rajandream M.A."/>
            <person name="Rice P."/>
            <person name="Rowley N."/>
            <person name="Skelton J."/>
            <person name="Smith V."/>
            <person name="Walsh S.V."/>
            <person name="Whitehead S."/>
            <person name="Barrell B.G."/>
        </authorList>
    </citation>
    <scope>NUCLEOTIDE SEQUENCE [LARGE SCALE GENOMIC DNA]</scope>
    <source>
        <strain>ATCC 204508 / S288c</strain>
    </source>
</reference>
<reference key="2">
    <citation type="journal article" date="2014" name="G3 (Bethesda)">
        <title>The reference genome sequence of Saccharomyces cerevisiae: Then and now.</title>
        <authorList>
            <person name="Engel S.R."/>
            <person name="Dietrich F.S."/>
            <person name="Fisk D.G."/>
            <person name="Binkley G."/>
            <person name="Balakrishnan R."/>
            <person name="Costanzo M.C."/>
            <person name="Dwight S.S."/>
            <person name="Hitz B.C."/>
            <person name="Karra K."/>
            <person name="Nash R.S."/>
            <person name="Weng S."/>
            <person name="Wong E.D."/>
            <person name="Lloyd P."/>
            <person name="Skrzypek M.S."/>
            <person name="Miyasato S.R."/>
            <person name="Simison M."/>
            <person name="Cherry J.M."/>
        </authorList>
    </citation>
    <scope>GENOME REANNOTATION</scope>
    <source>
        <strain>ATCC 204508 / S288c</strain>
    </source>
</reference>
<reference key="3">
    <citation type="journal article" date="2002" name="Genome Res.">
        <title>Parallel identification of new genes in Saccharomyces cerevisiae.</title>
        <authorList>
            <person name="Oshiro G."/>
            <person name="Wodicka L.M."/>
            <person name="Washburn M.P."/>
            <person name="Yates J.R. III"/>
            <person name="Lockhart D.J."/>
            <person name="Winzeler E.A."/>
        </authorList>
    </citation>
    <scope>IDENTIFICATION BY MASS SPECTROMETRY</scope>
</reference>
<evidence type="ECO:0000255" key="1"/>
<evidence type="ECO:0000305" key="2"/>
<keyword id="KW-0472">Membrane</keyword>
<keyword id="KW-1185">Reference proteome</keyword>
<keyword id="KW-0812">Transmembrane</keyword>
<keyword id="KW-1133">Transmembrane helix</keyword>
<proteinExistence type="evidence at protein level"/>
<accession>Q3E739</accession>
<accession>D6VVV2</accession>
<feature type="chain" id="PRO_0000245407" description="Uncharacterized protein YIR021W-A">
    <location>
        <begin position="1"/>
        <end position="70"/>
    </location>
</feature>
<feature type="transmembrane region" description="Helical" evidence="1">
    <location>
        <begin position="15"/>
        <end position="37"/>
    </location>
</feature>
<organism>
    <name type="scientific">Saccharomyces cerevisiae (strain ATCC 204508 / S288c)</name>
    <name type="common">Baker's yeast</name>
    <dbReference type="NCBI Taxonomy" id="559292"/>
    <lineage>
        <taxon>Eukaryota</taxon>
        <taxon>Fungi</taxon>
        <taxon>Dikarya</taxon>
        <taxon>Ascomycota</taxon>
        <taxon>Saccharomycotina</taxon>
        <taxon>Saccharomycetes</taxon>
        <taxon>Saccharomycetales</taxon>
        <taxon>Saccharomycetaceae</taxon>
        <taxon>Saccharomyces</taxon>
    </lineage>
</organism>
<gene>
    <name type="ordered locus">YIR021W-A</name>
</gene>
<sequence>MSFSVSCKTPKTTKLLVSSISESAVALIIITIRILFSIGKSDFKKIISKEINGAETIYYRNIPESKPQGS</sequence>
<protein>
    <recommendedName>
        <fullName>Uncharacterized protein YIR021W-A</fullName>
    </recommendedName>
</protein>
<name>YI021_YEAST</name>